<gene>
    <name evidence="1" type="primary">ef1b</name>
    <name type="ordered locus">UNCMA_15680</name>
    <name type="ORF">RCIX1379</name>
</gene>
<keyword id="KW-0251">Elongation factor</keyword>
<keyword id="KW-0648">Protein biosynthesis</keyword>
<keyword id="KW-1185">Reference proteome</keyword>
<evidence type="ECO:0000255" key="1">
    <source>
        <dbReference type="HAMAP-Rule" id="MF_00043"/>
    </source>
</evidence>
<proteinExistence type="inferred from homology"/>
<name>EF1B_METAR</name>
<organism>
    <name type="scientific">Methanocella arvoryzae (strain DSM 22066 / NBRC 105507 / MRE50)</name>
    <dbReference type="NCBI Taxonomy" id="351160"/>
    <lineage>
        <taxon>Archaea</taxon>
        <taxon>Methanobacteriati</taxon>
        <taxon>Methanobacteriota</taxon>
        <taxon>Stenosarchaea group</taxon>
        <taxon>Methanomicrobia</taxon>
        <taxon>Methanocellales</taxon>
        <taxon>Methanocellaceae</taxon>
        <taxon>Methanocella</taxon>
    </lineage>
</organism>
<dbReference type="EMBL" id="AM114193">
    <property type="protein sequence ID" value="CAJ36657.1"/>
    <property type="molecule type" value="Genomic_DNA"/>
</dbReference>
<dbReference type="RefSeq" id="WP_012035894.1">
    <property type="nucleotide sequence ID" value="NC_009464.1"/>
</dbReference>
<dbReference type="SMR" id="Q0W4N6"/>
<dbReference type="STRING" id="351160.RCIX1379"/>
<dbReference type="GeneID" id="5143338"/>
<dbReference type="KEGG" id="rci:RCIX1379"/>
<dbReference type="PATRIC" id="fig|351160.9.peg.1606"/>
<dbReference type="eggNOG" id="arCOG01988">
    <property type="taxonomic scope" value="Archaea"/>
</dbReference>
<dbReference type="OrthoDB" id="84643at2157"/>
<dbReference type="Proteomes" id="UP000000663">
    <property type="component" value="Chromosome"/>
</dbReference>
<dbReference type="GO" id="GO:0003746">
    <property type="term" value="F:translation elongation factor activity"/>
    <property type="evidence" value="ECO:0007669"/>
    <property type="project" value="UniProtKB-UniRule"/>
</dbReference>
<dbReference type="CDD" id="cd00292">
    <property type="entry name" value="EF1B"/>
    <property type="match status" value="1"/>
</dbReference>
<dbReference type="Gene3D" id="3.30.70.60">
    <property type="match status" value="1"/>
</dbReference>
<dbReference type="HAMAP" id="MF_00043">
    <property type="entry name" value="EF1_beta"/>
    <property type="match status" value="1"/>
</dbReference>
<dbReference type="InterPro" id="IPR036219">
    <property type="entry name" value="eEF-1beta-like_sf"/>
</dbReference>
<dbReference type="InterPro" id="IPR014038">
    <property type="entry name" value="EF1B_bsu/dsu_GNE"/>
</dbReference>
<dbReference type="InterPro" id="IPR014717">
    <property type="entry name" value="Transl_elong_EF1B/ribsomal_bS6"/>
</dbReference>
<dbReference type="InterPro" id="IPR004542">
    <property type="entry name" value="Transl_elong_EF1B_B_arc"/>
</dbReference>
<dbReference type="NCBIfam" id="TIGR00489">
    <property type="entry name" value="aEF-1_beta"/>
    <property type="match status" value="1"/>
</dbReference>
<dbReference type="NCBIfam" id="NF001670">
    <property type="entry name" value="PRK00435.1"/>
    <property type="match status" value="1"/>
</dbReference>
<dbReference type="PANTHER" id="PTHR39647">
    <property type="entry name" value="ELONGATION FACTOR 1-BETA"/>
    <property type="match status" value="1"/>
</dbReference>
<dbReference type="PANTHER" id="PTHR39647:SF1">
    <property type="entry name" value="ELONGATION FACTOR 1-BETA"/>
    <property type="match status" value="1"/>
</dbReference>
<dbReference type="Pfam" id="PF00736">
    <property type="entry name" value="EF1_GNE"/>
    <property type="match status" value="1"/>
</dbReference>
<dbReference type="PIRSF" id="PIRSF006521">
    <property type="entry name" value="Transl_elong_EF1B_B_arc"/>
    <property type="match status" value="1"/>
</dbReference>
<dbReference type="SMART" id="SM00888">
    <property type="entry name" value="EF1_GNE"/>
    <property type="match status" value="1"/>
</dbReference>
<dbReference type="SUPFAM" id="SSF54984">
    <property type="entry name" value="eEF-1beta-like"/>
    <property type="match status" value="1"/>
</dbReference>
<accession>Q0W4N6</accession>
<feature type="chain" id="PRO_0000366443" description="Elongation factor 1-beta">
    <location>
        <begin position="1"/>
        <end position="89"/>
    </location>
</feature>
<protein>
    <recommendedName>
        <fullName evidence="1">Elongation factor 1-beta</fullName>
        <shortName evidence="1">EF-1-beta</shortName>
    </recommendedName>
    <alternativeName>
        <fullName evidence="1">aEF-1beta</fullName>
    </alternativeName>
</protein>
<comment type="function">
    <text evidence="1">Promotes the exchange of GDP for GTP in EF-1-alpha/GDP, thus allowing the regeneration of EF-1-alpha/GTP that could then be used to form the ternary complex EF-1-alpha/GTP/AAtRNA.</text>
</comment>
<comment type="similarity">
    <text evidence="1">Belongs to the EF-1-beta/EF-1-delta family.</text>
</comment>
<reference key="1">
    <citation type="journal article" date="2006" name="Science">
        <title>Genome of rice cluster I archaea -- the key methane producers in the rice rhizosphere.</title>
        <authorList>
            <person name="Erkel C."/>
            <person name="Kube M."/>
            <person name="Reinhardt R."/>
            <person name="Liesack W."/>
        </authorList>
    </citation>
    <scope>NUCLEOTIDE SEQUENCE [LARGE SCALE GENOMIC DNA]</scope>
    <source>
        <strain>DSM 22066 / NBRC 105507 / MRE50</strain>
    </source>
</reference>
<sequence length="89" mass="9439">MADVVASIRVMPDSADRDLNELMDALKAAVPAGTKFQKFELKPIAFGLKAIMATVTVDDSEGGTEPVEEAWSKVPGVESVNVEATGRAF</sequence>